<dbReference type="EC" id="3.1.3.7" evidence="2"/>
<dbReference type="EMBL" id="U33283">
    <property type="protein sequence ID" value="AAC49121.1"/>
    <property type="molecule type" value="mRNA"/>
</dbReference>
<dbReference type="PIR" id="T03305">
    <property type="entry name" value="T03305"/>
</dbReference>
<dbReference type="SMR" id="P0C5A3"/>
<dbReference type="BRENDA" id="3.1.3.7">
    <property type="organism ID" value="4460"/>
</dbReference>
<dbReference type="ExpressionAtlas" id="P0C5A3">
    <property type="expression patterns" value="baseline and differential"/>
</dbReference>
<dbReference type="GO" id="GO:0008441">
    <property type="term" value="F:3'(2'),5'-bisphosphate nucleotidase activity"/>
    <property type="evidence" value="ECO:0007669"/>
    <property type="project" value="UniProtKB-EC"/>
</dbReference>
<dbReference type="GO" id="GO:0046872">
    <property type="term" value="F:metal ion binding"/>
    <property type="evidence" value="ECO:0007669"/>
    <property type="project" value="UniProtKB-KW"/>
</dbReference>
<dbReference type="GO" id="GO:0046854">
    <property type="term" value="P:phosphatidylinositol phosphate biosynthetic process"/>
    <property type="evidence" value="ECO:0007669"/>
    <property type="project" value="InterPro"/>
</dbReference>
<dbReference type="GO" id="GO:0000103">
    <property type="term" value="P:sulfate assimilation"/>
    <property type="evidence" value="ECO:0007669"/>
    <property type="project" value="TreeGrafter"/>
</dbReference>
<dbReference type="CDD" id="cd01517">
    <property type="entry name" value="PAP_phosphatase"/>
    <property type="match status" value="1"/>
</dbReference>
<dbReference type="FunFam" id="3.40.190.80:FF:000003">
    <property type="entry name" value="PAP-specific phosphatase HAL2-like"/>
    <property type="match status" value="1"/>
</dbReference>
<dbReference type="FunFam" id="3.30.540.10:FF:000016">
    <property type="entry name" value="SAL1 phosphatase"/>
    <property type="match status" value="1"/>
</dbReference>
<dbReference type="Gene3D" id="3.40.190.80">
    <property type="match status" value="1"/>
</dbReference>
<dbReference type="Gene3D" id="3.30.540.10">
    <property type="entry name" value="Fructose-1,6-Bisphosphatase, subunit A, domain 1"/>
    <property type="match status" value="1"/>
</dbReference>
<dbReference type="InterPro" id="IPR006239">
    <property type="entry name" value="DPNP"/>
</dbReference>
<dbReference type="InterPro" id="IPR020583">
    <property type="entry name" value="Inositol_monoP_metal-BS"/>
</dbReference>
<dbReference type="InterPro" id="IPR051090">
    <property type="entry name" value="Inositol_monoP_superfamily"/>
</dbReference>
<dbReference type="InterPro" id="IPR000760">
    <property type="entry name" value="Inositol_monophosphatase-like"/>
</dbReference>
<dbReference type="InterPro" id="IPR020550">
    <property type="entry name" value="Inositol_monophosphatase_CS"/>
</dbReference>
<dbReference type="NCBIfam" id="TIGR01330">
    <property type="entry name" value="bisphos_HAL2"/>
    <property type="match status" value="1"/>
</dbReference>
<dbReference type="PANTHER" id="PTHR43200:SF6">
    <property type="entry name" value="3'(2'),5'-BISPHOSPHATE NUCLEOTIDASE"/>
    <property type="match status" value="1"/>
</dbReference>
<dbReference type="PANTHER" id="PTHR43200">
    <property type="entry name" value="PHOSPHATASE"/>
    <property type="match status" value="1"/>
</dbReference>
<dbReference type="Pfam" id="PF00459">
    <property type="entry name" value="Inositol_P"/>
    <property type="match status" value="1"/>
</dbReference>
<dbReference type="PRINTS" id="PR00377">
    <property type="entry name" value="IMPHPHTASES"/>
</dbReference>
<dbReference type="SUPFAM" id="SSF56655">
    <property type="entry name" value="Carbohydrate phosphatase"/>
    <property type="match status" value="1"/>
</dbReference>
<dbReference type="PROSITE" id="PS00629">
    <property type="entry name" value="IMP_1"/>
    <property type="match status" value="1"/>
</dbReference>
<dbReference type="PROSITE" id="PS00630">
    <property type="entry name" value="IMP_2"/>
    <property type="match status" value="1"/>
</dbReference>
<sequence>MSQAAGNPYAAELAAAKKAVTLAARLCQAVQKDILQSGVQSKADQSPVTVADYGSQILVSLVLKMEAPASSSFSMVAEEDSEELRKEGAEEILENITELVNETIVDDGTYSIYFSKEGILSAIDDGKSEGGPSGRHWVLDPIDGTKGFLRGDQYAIALALLDEGKVVLGVLACPNLSLGSIGNLNGGSSGDQVGALFSATIGCGAEVESLQGSPAQKISVCSIDNPVEASFFESYEGAHSLRDLTGSIAEKLGVQAPPVRIDSQAKYGALARGDGAIYLRFPHKGYREKIWDHAAGSIVVTEAGGLVTDASGNDLDFSKGRFLDLDTGIIATNKQLMPSLLKAVQDAIKEQNQAASPL</sequence>
<feature type="chain" id="PRO_0000296248" description="3'(2'),5'-bisphosphate nucleotidase">
    <location>
        <begin position="1"/>
        <end position="358"/>
    </location>
</feature>
<feature type="active site" description="Proton acceptor" evidence="1">
    <location>
        <position position="52"/>
    </location>
</feature>
<feature type="active site" description="Proton acceptor" evidence="1">
    <location>
        <position position="145"/>
    </location>
</feature>
<feature type="binding site" evidence="1">
    <location>
        <position position="78"/>
    </location>
    <ligand>
        <name>Mg(2+)</name>
        <dbReference type="ChEBI" id="CHEBI:18420"/>
        <label>1</label>
    </ligand>
</feature>
<feature type="binding site" evidence="1">
    <location>
        <position position="78"/>
    </location>
    <ligand>
        <name>Mg(2+)</name>
        <dbReference type="ChEBI" id="CHEBI:18420"/>
        <label>3</label>
    </ligand>
</feature>
<feature type="binding site" evidence="1">
    <location>
        <position position="140"/>
    </location>
    <ligand>
        <name>Mg(2+)</name>
        <dbReference type="ChEBI" id="CHEBI:18420"/>
        <label>1</label>
    </ligand>
</feature>
<feature type="binding site" evidence="1">
    <location>
        <position position="140"/>
    </location>
    <ligand>
        <name>Mg(2+)</name>
        <dbReference type="ChEBI" id="CHEBI:18420"/>
        <label>2</label>
    </ligand>
</feature>
<feature type="binding site" evidence="1">
    <location>
        <position position="142"/>
    </location>
    <ligand>
        <name>Mg(2+)</name>
        <dbReference type="ChEBI" id="CHEBI:18420"/>
        <label>1</label>
    </ligand>
</feature>
<feature type="binding site" evidence="1">
    <location>
        <position position="143"/>
    </location>
    <ligand>
        <name>Mg(2+)</name>
        <dbReference type="ChEBI" id="CHEBI:18420"/>
        <label>2</label>
    </ligand>
</feature>
<feature type="binding site" evidence="1">
    <location>
        <position position="145"/>
    </location>
    <ligand>
        <name>adenosine 3',5'-bisphosphate</name>
        <dbReference type="ChEBI" id="CHEBI:58343"/>
    </ligand>
</feature>
<feature type="binding site" evidence="1">
    <location>
        <position position="239"/>
    </location>
    <ligand>
        <name>adenosine 3',5'-bisphosphate</name>
        <dbReference type="ChEBI" id="CHEBI:58343"/>
    </ligand>
</feature>
<feature type="binding site" evidence="1">
    <location>
        <position position="239"/>
    </location>
    <ligand>
        <name>AMP</name>
        <dbReference type="ChEBI" id="CHEBI:456215"/>
    </ligand>
</feature>
<feature type="binding site" evidence="1">
    <location>
        <position position="263"/>
    </location>
    <ligand>
        <name>adenosine 3',5'-bisphosphate</name>
        <dbReference type="ChEBI" id="CHEBI:58343"/>
    </ligand>
</feature>
<feature type="binding site" evidence="1">
    <location>
        <position position="263"/>
    </location>
    <ligand>
        <name>AMP</name>
        <dbReference type="ChEBI" id="CHEBI:456215"/>
    </ligand>
</feature>
<feature type="binding site" evidence="1">
    <location>
        <position position="266"/>
    </location>
    <ligand>
        <name>adenosine 3',5'-bisphosphate</name>
        <dbReference type="ChEBI" id="CHEBI:58343"/>
    </ligand>
</feature>
<feature type="binding site" evidence="1">
    <location>
        <position position="266"/>
    </location>
    <ligand>
        <name>AMP</name>
        <dbReference type="ChEBI" id="CHEBI:456215"/>
    </ligand>
</feature>
<feature type="binding site" evidence="1">
    <location>
        <position position="280"/>
    </location>
    <ligand>
        <name>adenosine 3',5'-bisphosphate</name>
        <dbReference type="ChEBI" id="CHEBI:58343"/>
    </ligand>
</feature>
<feature type="binding site" evidence="1">
    <location>
        <position position="280"/>
    </location>
    <ligand>
        <name>AMP</name>
        <dbReference type="ChEBI" id="CHEBI:456215"/>
    </ligand>
</feature>
<feature type="binding site" evidence="1">
    <location>
        <position position="292"/>
    </location>
    <ligand>
        <name>adenosine 3',5'-bisphosphate</name>
        <dbReference type="ChEBI" id="CHEBI:58343"/>
    </ligand>
</feature>
<feature type="binding site" evidence="1">
    <location>
        <position position="292"/>
    </location>
    <ligand>
        <name>AMP</name>
        <dbReference type="ChEBI" id="CHEBI:456215"/>
    </ligand>
</feature>
<feature type="binding site" evidence="1">
    <location>
        <position position="292"/>
    </location>
    <ligand>
        <name>Mg(2+)</name>
        <dbReference type="ChEBI" id="CHEBI:18420"/>
        <label>2</label>
    </ligand>
</feature>
<feature type="mutagenesis site" description="Has less than 5% wild-type catalytic activity." evidence="2">
    <original>D</original>
    <variation>A</variation>
    <variation>N</variation>
    <location>
        <position position="140"/>
    </location>
</feature>
<feature type="mutagenesis site" description="Has less than 5% wild-type catalytic activity." evidence="2">
    <original>D</original>
    <variation>N</variation>
    <location>
        <position position="143"/>
    </location>
</feature>
<feature type="mutagenesis site" description="Has less than 5% wild-type catalytic activity." evidence="2">
    <original>W</original>
    <variation>L</variation>
    <location>
        <position position="291"/>
    </location>
</feature>
<feature type="mutagenesis site" description="Has less than 5% wild-type catalytic activity." evidence="2">
    <original>D</original>
    <variation>A</variation>
    <variation>N</variation>
    <location>
        <position position="292"/>
    </location>
</feature>
<comment type="function">
    <text evidence="2">Phosphatase that converts adenosine 3'-phosphate 5'-phosphosulfate (PAPS) to adenosine 5'-phosphosulfate (APS) and 3'(2')-phosphoadenosine 5'-phosphate (PAP) to AMP. May regulate the flux of sulfur in the sulfur-activation pathway by converting PAPS to APS. Shows no activity on myo-inositol 1-phosphate, beta-glycerol phosphate, NADPH, NADP and 5'-AMP.</text>
</comment>
<comment type="catalytic activity">
    <reaction evidence="2">
        <text>3'-phosphoadenylyl sulfate + H2O = adenosine 5'-phosphosulfate + phosphate</text>
        <dbReference type="Rhea" id="RHEA:77639"/>
        <dbReference type="ChEBI" id="CHEBI:15377"/>
        <dbReference type="ChEBI" id="CHEBI:43474"/>
        <dbReference type="ChEBI" id="CHEBI:58243"/>
        <dbReference type="ChEBI" id="CHEBI:58339"/>
        <dbReference type="EC" id="3.1.3.7"/>
    </reaction>
    <physiologicalReaction direction="left-to-right" evidence="5">
        <dbReference type="Rhea" id="RHEA:77640"/>
    </physiologicalReaction>
</comment>
<comment type="catalytic activity">
    <reaction evidence="2">
        <text>adenosine 3',5'-bisphosphate + H2O = AMP + phosphate</text>
        <dbReference type="Rhea" id="RHEA:10040"/>
        <dbReference type="ChEBI" id="CHEBI:15377"/>
        <dbReference type="ChEBI" id="CHEBI:43474"/>
        <dbReference type="ChEBI" id="CHEBI:58343"/>
        <dbReference type="ChEBI" id="CHEBI:456215"/>
        <dbReference type="EC" id="3.1.3.7"/>
    </reaction>
    <physiologicalReaction direction="left-to-right" evidence="5">
        <dbReference type="Rhea" id="RHEA:10041"/>
    </physiologicalReaction>
</comment>
<comment type="catalytic activity">
    <reaction evidence="2">
        <text>adenosine 2',5'-bisphosphate + H2O = AMP + phosphate</text>
        <dbReference type="Rhea" id="RHEA:77643"/>
        <dbReference type="ChEBI" id="CHEBI:15377"/>
        <dbReference type="ChEBI" id="CHEBI:43474"/>
        <dbReference type="ChEBI" id="CHEBI:194156"/>
        <dbReference type="ChEBI" id="CHEBI:456215"/>
        <dbReference type="EC" id="3.1.3.7"/>
    </reaction>
    <physiologicalReaction direction="left-to-right" evidence="5">
        <dbReference type="Rhea" id="RHEA:77644"/>
    </physiologicalReaction>
</comment>
<comment type="cofactor">
    <cofactor evidence="2">
        <name>Mg(2+)</name>
        <dbReference type="ChEBI" id="CHEBI:18420"/>
    </cofactor>
</comment>
<comment type="activity regulation">
    <text evidence="2">Inhibited by Ca(2+), Li(+), and Na(+) and activated by K(+).</text>
</comment>
<comment type="biophysicochemical properties">
    <kinetics>
        <KM evidence="2">100 uM for 3'-phosphoadenylyl sulfate</KM>
        <KM evidence="2">240 uM for adenosine 3',5'-bisphosphate</KM>
    </kinetics>
    <phDependence>
        <text evidence="2">Optimum pH is 8.5.</text>
    </phDependence>
</comment>
<comment type="tissue specificity">
    <text evidence="2">Is constitutively transcribed in both roots and shoots.</text>
</comment>
<comment type="similarity">
    <text evidence="4">Belongs to the inositol monophosphatase superfamily.</text>
</comment>
<accession>P0C5A3</accession>
<accession>Q40639</accession>
<proteinExistence type="evidence at protein level"/>
<keyword id="KW-0378">Hydrolase</keyword>
<keyword id="KW-0460">Magnesium</keyword>
<keyword id="KW-0479">Metal-binding</keyword>
<name>DPNP_ORYSA</name>
<gene>
    <name evidence="3" type="primary">RHL</name>
</gene>
<protein>
    <recommendedName>
        <fullName evidence="5">3'(2'),5'-bisphosphate nucleotidase</fullName>
        <ecNumber evidence="2">3.1.3.7</ecNumber>
    </recommendedName>
    <alternativeName>
        <fullName evidence="3">3'(2'),5'-diphosphonucleoside 3'(2')-phosphohydrolase</fullName>
        <shortName evidence="3">DPNPase</shortName>
    </alternativeName>
    <alternativeName>
        <fullName>3'(2'),5-bisphosphonucleoside 3'(2')-phosphohydrolase</fullName>
    </alternativeName>
</protein>
<organism>
    <name type="scientific">Oryza sativa</name>
    <name type="common">Rice</name>
    <dbReference type="NCBI Taxonomy" id="4530"/>
    <lineage>
        <taxon>Eukaryota</taxon>
        <taxon>Viridiplantae</taxon>
        <taxon>Streptophyta</taxon>
        <taxon>Embryophyta</taxon>
        <taxon>Tracheophyta</taxon>
        <taxon>Spermatophyta</taxon>
        <taxon>Magnoliopsida</taxon>
        <taxon>Liliopsida</taxon>
        <taxon>Poales</taxon>
        <taxon>Poaceae</taxon>
        <taxon>BOP clade</taxon>
        <taxon>Oryzoideae</taxon>
        <taxon>Oryzeae</taxon>
        <taxon>Oryzinae</taxon>
        <taxon>Oryza</taxon>
    </lineage>
</organism>
<reference key="1">
    <citation type="journal article" date="1995" name="J. Biol. Chem.">
        <title>A rice HAL2-like gene encodes a Ca(2+)-sensitive 3'(2'),5'-diphosphonucleoside 3'(2')-phosphohydrolase and complements yeast met22 and Escherichia coli cysQ mutations.</title>
        <authorList>
            <person name="Peng Z."/>
            <person name="Verma D.P.S."/>
        </authorList>
    </citation>
    <scope>NUCLEOTIDE SEQUENCE [MRNA]</scope>
    <scope>FUNCTION</scope>
    <scope>CATALYTIC ACTIVITY</scope>
    <scope>COFACTOR</scope>
    <scope>BIOPHYSICOCHEMICAL PROPERTIES</scope>
    <scope>SUBSTRATE SPECIFICITY</scope>
    <scope>ACTIVITY REGULATION</scope>
    <scope>TISSUE SPECIFICITY</scope>
    <scope>MUTAGENESIS OF ASP-140; ASP-143; TRP-291 AND ASP-292</scope>
    <source>
        <strain>cv. Tallahamsa</strain>
    </source>
</reference>
<evidence type="ECO:0000250" key="1">
    <source>
        <dbReference type="UniProtKB" id="P32179"/>
    </source>
</evidence>
<evidence type="ECO:0000269" key="2">
    <source>
    </source>
</evidence>
<evidence type="ECO:0000303" key="3">
    <source>
    </source>
</evidence>
<evidence type="ECO:0000305" key="4"/>
<evidence type="ECO:0000305" key="5">
    <source>
    </source>
</evidence>